<gene>
    <name evidence="1" type="primary">fbp</name>
    <name type="ordered locus">LL0257</name>
    <name type="ORF">L54021</name>
</gene>
<accession>Q9CIU9</accession>
<proteinExistence type="inferred from homology"/>
<evidence type="ECO:0000255" key="1">
    <source>
        <dbReference type="HAMAP-Rule" id="MF_01854"/>
    </source>
</evidence>
<keyword id="KW-0119">Carbohydrate metabolism</keyword>
<keyword id="KW-0378">Hydrolase</keyword>
<keyword id="KW-0464">Manganese</keyword>
<keyword id="KW-1185">Reference proteome</keyword>
<sequence length="640" mass="73846">MDKKYYQLLKNQFSSKEAVLTEIINLSAICELPKATEHFMSDVHGEYDAFNHVLRNGSGSIKEKLRDCFPEFSATEISSLATLIYYPQEKLDSECQLKETEEFENYCRINLVYLLKTVKFVGQKYTRSKVRKAFPEKFRYILEELINEVDSTTDKRDYFDSILSQLQNLGEFTRLIVALADTIRRLTVDHLHVVGDIYDRGPYPDKIIDRLIKMPSVDVQWGNHDIVWMAAFSGSPLAMMNVIRICARYGNLDILEESYGINLRMILEYAERYYEPSEAFQPRLVEGVRLSDDEKALLNKLQEATAILQFKLESQLIKRRPDFQLEHRDVLHFIDFSEKTIKLGTEVYELTDFQAPTVNPEQPESLTAEEEKIISHLLNNFRSSDKLKRHVEFLQEKGAMYLSYNGNLLIHGCLPLHENGDFKSFTVNKEAHAGRDLLDFFDQEVRKCLAHPENSTDLATDLMWYLWVGECSSLFGKTAMTTFERYYIKDKKTHVEKKNPYYQLREEAEIIRKILENFGLDEGGHLVNGHTPIKEKNGENPIKADGKLIVIDGGFAKAYQKETGIAGYTILYNSFGIQLVAHQPFSTVKEAVEKGTDIISLKCLVAEVDQRKRVKDTNVGQTLLSEIADLEVLFEHYEEF</sequence>
<organism>
    <name type="scientific">Lactococcus lactis subsp. lactis (strain IL1403)</name>
    <name type="common">Streptococcus lactis</name>
    <dbReference type="NCBI Taxonomy" id="272623"/>
    <lineage>
        <taxon>Bacteria</taxon>
        <taxon>Bacillati</taxon>
        <taxon>Bacillota</taxon>
        <taxon>Bacilli</taxon>
        <taxon>Lactobacillales</taxon>
        <taxon>Streptococcaceae</taxon>
        <taxon>Lactococcus</taxon>
    </lineage>
</organism>
<reference key="1">
    <citation type="journal article" date="2001" name="Genome Res.">
        <title>The complete genome sequence of the lactic acid bacterium Lactococcus lactis ssp. lactis IL1403.</title>
        <authorList>
            <person name="Bolotin A."/>
            <person name="Wincker P."/>
            <person name="Mauger S."/>
            <person name="Jaillon O."/>
            <person name="Malarme K."/>
            <person name="Weissenbach J."/>
            <person name="Ehrlich S.D."/>
            <person name="Sorokin A."/>
        </authorList>
    </citation>
    <scope>NUCLEOTIDE SEQUENCE [LARGE SCALE GENOMIC DNA]</scope>
    <source>
        <strain>IL1403</strain>
    </source>
</reference>
<name>F16PC_LACLA</name>
<protein>
    <recommendedName>
        <fullName evidence="1">Fructose-1,6-bisphosphatase class 3</fullName>
        <shortName evidence="1">FBPase class 3</shortName>
        <ecNumber evidence="1">3.1.3.11</ecNumber>
    </recommendedName>
    <alternativeName>
        <fullName evidence="1">D-fructose-1,6-bisphosphate 1-phosphohydrolase class 3</fullName>
    </alternativeName>
</protein>
<comment type="catalytic activity">
    <reaction evidence="1">
        <text>beta-D-fructose 1,6-bisphosphate + H2O = beta-D-fructose 6-phosphate + phosphate</text>
        <dbReference type="Rhea" id="RHEA:11064"/>
        <dbReference type="ChEBI" id="CHEBI:15377"/>
        <dbReference type="ChEBI" id="CHEBI:32966"/>
        <dbReference type="ChEBI" id="CHEBI:43474"/>
        <dbReference type="ChEBI" id="CHEBI:57634"/>
        <dbReference type="EC" id="3.1.3.11"/>
    </reaction>
</comment>
<comment type="cofactor">
    <cofactor evidence="1">
        <name>Mn(2+)</name>
        <dbReference type="ChEBI" id="CHEBI:29035"/>
    </cofactor>
</comment>
<comment type="pathway">
    <text evidence="1">Carbohydrate biosynthesis; gluconeogenesis.</text>
</comment>
<comment type="similarity">
    <text evidence="1">Belongs to the FBPase class 3 family.</text>
</comment>
<feature type="chain" id="PRO_0000363099" description="Fructose-1,6-bisphosphatase class 3">
    <location>
        <begin position="1"/>
        <end position="640"/>
    </location>
</feature>
<dbReference type="EC" id="3.1.3.11" evidence="1"/>
<dbReference type="EMBL" id="AE005176">
    <property type="protein sequence ID" value="AAK04355.1"/>
    <property type="molecule type" value="Genomic_DNA"/>
</dbReference>
<dbReference type="PIR" id="A86657">
    <property type="entry name" value="A86657"/>
</dbReference>
<dbReference type="RefSeq" id="NP_266413.1">
    <property type="nucleotide sequence ID" value="NC_002662.1"/>
</dbReference>
<dbReference type="RefSeq" id="WP_010905244.1">
    <property type="nucleotide sequence ID" value="NC_002662.1"/>
</dbReference>
<dbReference type="PaxDb" id="272623-L54021"/>
<dbReference type="EnsemblBacteria" id="AAK04355">
    <property type="protein sequence ID" value="AAK04355"/>
    <property type="gene ID" value="L54021"/>
</dbReference>
<dbReference type="KEGG" id="lla:L54021"/>
<dbReference type="PATRIC" id="fig|272623.7.peg.282"/>
<dbReference type="eggNOG" id="COG3855">
    <property type="taxonomic scope" value="Bacteria"/>
</dbReference>
<dbReference type="HOGENOM" id="CLU_028392_2_0_9"/>
<dbReference type="OrthoDB" id="9779903at2"/>
<dbReference type="UniPathway" id="UPA00138"/>
<dbReference type="Proteomes" id="UP000002196">
    <property type="component" value="Chromosome"/>
</dbReference>
<dbReference type="GO" id="GO:0042132">
    <property type="term" value="F:fructose 1,6-bisphosphate 1-phosphatase activity"/>
    <property type="evidence" value="ECO:0007669"/>
    <property type="project" value="UniProtKB-UniRule"/>
</dbReference>
<dbReference type="GO" id="GO:0006094">
    <property type="term" value="P:gluconeogenesis"/>
    <property type="evidence" value="ECO:0007669"/>
    <property type="project" value="UniProtKB-UniRule"/>
</dbReference>
<dbReference type="Gene3D" id="3.60.21.10">
    <property type="match status" value="1"/>
</dbReference>
<dbReference type="HAMAP" id="MF_01854">
    <property type="entry name" value="FBPase_class3"/>
    <property type="match status" value="1"/>
</dbReference>
<dbReference type="InterPro" id="IPR009164">
    <property type="entry name" value="FBPtase_class3"/>
</dbReference>
<dbReference type="InterPro" id="IPR029052">
    <property type="entry name" value="Metallo-depent_PP-like"/>
</dbReference>
<dbReference type="Pfam" id="PF06874">
    <property type="entry name" value="FBPase_2"/>
    <property type="match status" value="1"/>
</dbReference>
<dbReference type="PIRSF" id="PIRSF000906">
    <property type="entry name" value="FBPtase_Bacill"/>
    <property type="match status" value="1"/>
</dbReference>
<dbReference type="SUPFAM" id="SSF56300">
    <property type="entry name" value="Metallo-dependent phosphatases"/>
    <property type="match status" value="1"/>
</dbReference>